<keyword id="KW-0004">4Fe-4S</keyword>
<keyword id="KW-0963">Cytoplasm</keyword>
<keyword id="KW-0408">Iron</keyword>
<keyword id="KW-0411">Iron-sulfur</keyword>
<keyword id="KW-0479">Metal-binding</keyword>
<keyword id="KW-0662">Pyridine nucleotide biosynthesis</keyword>
<keyword id="KW-0808">Transferase</keyword>
<gene>
    <name evidence="1" type="primary">nadA</name>
    <name type="ordered locus">SPA1987</name>
</gene>
<feature type="chain" id="PRO_1000024969" description="Quinolinate synthase">
    <location>
        <begin position="1"/>
        <end position="347"/>
    </location>
</feature>
<feature type="binding site" evidence="1">
    <location>
        <position position="47"/>
    </location>
    <ligand>
        <name>iminosuccinate</name>
        <dbReference type="ChEBI" id="CHEBI:77875"/>
    </ligand>
</feature>
<feature type="binding site" evidence="1">
    <location>
        <position position="68"/>
    </location>
    <ligand>
        <name>iminosuccinate</name>
        <dbReference type="ChEBI" id="CHEBI:77875"/>
    </ligand>
</feature>
<feature type="binding site" evidence="1">
    <location>
        <position position="113"/>
    </location>
    <ligand>
        <name>[4Fe-4S] cluster</name>
        <dbReference type="ChEBI" id="CHEBI:49883"/>
    </ligand>
</feature>
<feature type="binding site" evidence="1">
    <location>
        <begin position="139"/>
        <end position="141"/>
    </location>
    <ligand>
        <name>iminosuccinate</name>
        <dbReference type="ChEBI" id="CHEBI:77875"/>
    </ligand>
</feature>
<feature type="binding site" evidence="1">
    <location>
        <position position="156"/>
    </location>
    <ligand>
        <name>iminosuccinate</name>
        <dbReference type="ChEBI" id="CHEBI:77875"/>
    </ligand>
</feature>
<feature type="binding site" evidence="1">
    <location>
        <position position="200"/>
    </location>
    <ligand>
        <name>[4Fe-4S] cluster</name>
        <dbReference type="ChEBI" id="CHEBI:49883"/>
    </ligand>
</feature>
<feature type="binding site" evidence="1">
    <location>
        <begin position="226"/>
        <end position="228"/>
    </location>
    <ligand>
        <name>iminosuccinate</name>
        <dbReference type="ChEBI" id="CHEBI:77875"/>
    </ligand>
</feature>
<feature type="binding site" evidence="1">
    <location>
        <position position="243"/>
    </location>
    <ligand>
        <name>iminosuccinate</name>
        <dbReference type="ChEBI" id="CHEBI:77875"/>
    </ligand>
</feature>
<feature type="binding site" evidence="1">
    <location>
        <position position="297"/>
    </location>
    <ligand>
        <name>[4Fe-4S] cluster</name>
        <dbReference type="ChEBI" id="CHEBI:49883"/>
    </ligand>
</feature>
<accession>Q5PCN5</accession>
<proteinExistence type="inferred from homology"/>
<protein>
    <recommendedName>
        <fullName evidence="1">Quinolinate synthase</fullName>
        <ecNumber evidence="1">2.5.1.72</ecNumber>
    </recommendedName>
</protein>
<organism>
    <name type="scientific">Salmonella paratyphi A (strain ATCC 9150 / SARB42)</name>
    <dbReference type="NCBI Taxonomy" id="295319"/>
    <lineage>
        <taxon>Bacteria</taxon>
        <taxon>Pseudomonadati</taxon>
        <taxon>Pseudomonadota</taxon>
        <taxon>Gammaproteobacteria</taxon>
        <taxon>Enterobacterales</taxon>
        <taxon>Enterobacteriaceae</taxon>
        <taxon>Salmonella</taxon>
    </lineage>
</organism>
<reference key="1">
    <citation type="journal article" date="2004" name="Nat. Genet.">
        <title>Comparison of genome degradation in Paratyphi A and Typhi, human-restricted serovars of Salmonella enterica that cause typhoid.</title>
        <authorList>
            <person name="McClelland M."/>
            <person name="Sanderson K.E."/>
            <person name="Clifton S.W."/>
            <person name="Latreille P."/>
            <person name="Porwollik S."/>
            <person name="Sabo A."/>
            <person name="Meyer R."/>
            <person name="Bieri T."/>
            <person name="Ozersky P."/>
            <person name="McLellan M."/>
            <person name="Harkins C.R."/>
            <person name="Wang C."/>
            <person name="Nguyen C."/>
            <person name="Berghoff A."/>
            <person name="Elliott G."/>
            <person name="Kohlberg S."/>
            <person name="Strong C."/>
            <person name="Du F."/>
            <person name="Carter J."/>
            <person name="Kremizki C."/>
            <person name="Layman D."/>
            <person name="Leonard S."/>
            <person name="Sun H."/>
            <person name="Fulton L."/>
            <person name="Nash W."/>
            <person name="Miner T."/>
            <person name="Minx P."/>
            <person name="Delehaunty K."/>
            <person name="Fronick C."/>
            <person name="Magrini V."/>
            <person name="Nhan M."/>
            <person name="Warren W."/>
            <person name="Florea L."/>
            <person name="Spieth J."/>
            <person name="Wilson R.K."/>
        </authorList>
    </citation>
    <scope>NUCLEOTIDE SEQUENCE [LARGE SCALE GENOMIC DNA]</scope>
    <source>
        <strain>ATCC 9150 / SARB42</strain>
    </source>
</reference>
<sequence>MSVMFDPQAAIYPFPPKPTPLNDDEKQFYREKIKRLLKERNAVMVAHYYTDPEIQQLAEETGGCISDSLEMARFGAKHAASTLLVAGVRFMGETAKILSPEKNILMPTLAAECSLDLGCPIDEFSAFCDAHPDRTVVVYANTSAAVKARADWVVTSSIAVELIEHLDSLGEKIIWAPDRHLGNYVQKQTGADVLCWQGACIVHDEFKTQALTRLKKIYPDAALLVHPESPQSIVEMADAVGSTSQLIKAAKTLPHRQLIVATDRGIFYKMQQAVPEKELLEAPTAGEGATCRSCAHCPWMAMNGLKAIAEGLEQGGAAHEIQVDAALREGALLPLNRMLDFAATLRA</sequence>
<dbReference type="EC" id="2.5.1.72" evidence="1"/>
<dbReference type="EMBL" id="CP000026">
    <property type="protein sequence ID" value="AAV77895.1"/>
    <property type="molecule type" value="Genomic_DNA"/>
</dbReference>
<dbReference type="RefSeq" id="WP_000115334.1">
    <property type="nucleotide sequence ID" value="NC_006511.1"/>
</dbReference>
<dbReference type="SMR" id="Q5PCN5"/>
<dbReference type="KEGG" id="spt:SPA1987"/>
<dbReference type="HOGENOM" id="CLU_047382_1_0_6"/>
<dbReference type="UniPathway" id="UPA00253">
    <property type="reaction ID" value="UER00327"/>
</dbReference>
<dbReference type="Proteomes" id="UP000008185">
    <property type="component" value="Chromosome"/>
</dbReference>
<dbReference type="GO" id="GO:0005829">
    <property type="term" value="C:cytosol"/>
    <property type="evidence" value="ECO:0007669"/>
    <property type="project" value="TreeGrafter"/>
</dbReference>
<dbReference type="GO" id="GO:0051539">
    <property type="term" value="F:4 iron, 4 sulfur cluster binding"/>
    <property type="evidence" value="ECO:0007669"/>
    <property type="project" value="UniProtKB-KW"/>
</dbReference>
<dbReference type="GO" id="GO:0046872">
    <property type="term" value="F:metal ion binding"/>
    <property type="evidence" value="ECO:0007669"/>
    <property type="project" value="UniProtKB-KW"/>
</dbReference>
<dbReference type="GO" id="GO:0008987">
    <property type="term" value="F:quinolinate synthetase A activity"/>
    <property type="evidence" value="ECO:0007669"/>
    <property type="project" value="UniProtKB-UniRule"/>
</dbReference>
<dbReference type="GO" id="GO:0034628">
    <property type="term" value="P:'de novo' NAD biosynthetic process from L-aspartate"/>
    <property type="evidence" value="ECO:0007669"/>
    <property type="project" value="TreeGrafter"/>
</dbReference>
<dbReference type="FunFam" id="3.40.50.10800:FF:000003">
    <property type="entry name" value="Quinolinate synthase A"/>
    <property type="match status" value="1"/>
</dbReference>
<dbReference type="Gene3D" id="3.40.50.10800">
    <property type="entry name" value="NadA-like"/>
    <property type="match status" value="3"/>
</dbReference>
<dbReference type="HAMAP" id="MF_00567">
    <property type="entry name" value="NadA_type1"/>
    <property type="match status" value="1"/>
</dbReference>
<dbReference type="InterPro" id="IPR003473">
    <property type="entry name" value="NadA"/>
</dbReference>
<dbReference type="InterPro" id="IPR036094">
    <property type="entry name" value="NadA_sf"/>
</dbReference>
<dbReference type="InterPro" id="IPR023513">
    <property type="entry name" value="Quinolinate_synth_A_type1"/>
</dbReference>
<dbReference type="NCBIfam" id="TIGR00550">
    <property type="entry name" value="nadA"/>
    <property type="match status" value="1"/>
</dbReference>
<dbReference type="NCBIfam" id="NF006877">
    <property type="entry name" value="PRK09375.1-1"/>
    <property type="match status" value="1"/>
</dbReference>
<dbReference type="NCBIfam" id="NF006878">
    <property type="entry name" value="PRK09375.1-2"/>
    <property type="match status" value="1"/>
</dbReference>
<dbReference type="PANTHER" id="PTHR30573:SF0">
    <property type="entry name" value="QUINOLINATE SYNTHASE, CHLOROPLASTIC"/>
    <property type="match status" value="1"/>
</dbReference>
<dbReference type="PANTHER" id="PTHR30573">
    <property type="entry name" value="QUINOLINATE SYNTHETASE A"/>
    <property type="match status" value="1"/>
</dbReference>
<dbReference type="Pfam" id="PF02445">
    <property type="entry name" value="NadA"/>
    <property type="match status" value="1"/>
</dbReference>
<dbReference type="SUPFAM" id="SSF142754">
    <property type="entry name" value="NadA-like"/>
    <property type="match status" value="1"/>
</dbReference>
<evidence type="ECO:0000255" key="1">
    <source>
        <dbReference type="HAMAP-Rule" id="MF_00567"/>
    </source>
</evidence>
<comment type="function">
    <text evidence="1">Catalyzes the condensation of iminoaspartate with dihydroxyacetone phosphate to form quinolinate.</text>
</comment>
<comment type="catalytic activity">
    <reaction evidence="1">
        <text>iminosuccinate + dihydroxyacetone phosphate = quinolinate + phosphate + 2 H2O + H(+)</text>
        <dbReference type="Rhea" id="RHEA:25888"/>
        <dbReference type="ChEBI" id="CHEBI:15377"/>
        <dbReference type="ChEBI" id="CHEBI:15378"/>
        <dbReference type="ChEBI" id="CHEBI:29959"/>
        <dbReference type="ChEBI" id="CHEBI:43474"/>
        <dbReference type="ChEBI" id="CHEBI:57642"/>
        <dbReference type="ChEBI" id="CHEBI:77875"/>
        <dbReference type="EC" id="2.5.1.72"/>
    </reaction>
    <physiologicalReaction direction="left-to-right" evidence="1">
        <dbReference type="Rhea" id="RHEA:25889"/>
    </physiologicalReaction>
</comment>
<comment type="cofactor">
    <cofactor evidence="1">
        <name>[4Fe-4S] cluster</name>
        <dbReference type="ChEBI" id="CHEBI:49883"/>
    </cofactor>
    <text evidence="1">Binds 1 [4Fe-4S] cluster per subunit.</text>
</comment>
<comment type="pathway">
    <text evidence="1">Cofactor biosynthesis; NAD(+) biosynthesis; quinolinate from iminoaspartate: step 1/1.</text>
</comment>
<comment type="subcellular location">
    <subcellularLocation>
        <location evidence="1">Cytoplasm</location>
    </subcellularLocation>
</comment>
<comment type="similarity">
    <text evidence="1">Belongs to the quinolinate synthase family. Type 1 subfamily.</text>
</comment>
<name>NADA_SALPA</name>